<dbReference type="EMBL" id="AE000516">
    <property type="protein sequence ID" value="AAK45532.1"/>
    <property type="molecule type" value="Genomic_DNA"/>
</dbReference>
<dbReference type="PIR" id="C70952">
    <property type="entry name" value="C70952"/>
</dbReference>
<dbReference type="RefSeq" id="WP_003406295.1">
    <property type="nucleotide sequence ID" value="NZ_KK341227.1"/>
</dbReference>
<dbReference type="SMR" id="P9WG02"/>
<dbReference type="GeneID" id="45425206"/>
<dbReference type="KEGG" id="mtc:MT1274"/>
<dbReference type="PATRIC" id="fig|83331.31.peg.1377"/>
<dbReference type="HOGENOM" id="CLU_016047_0_3_11"/>
<dbReference type="Proteomes" id="UP000001020">
    <property type="component" value="Chromosome"/>
</dbReference>
<dbReference type="GO" id="GO:0005886">
    <property type="term" value="C:plasma membrane"/>
    <property type="evidence" value="ECO:0007669"/>
    <property type="project" value="UniProtKB-SubCell"/>
</dbReference>
<dbReference type="GO" id="GO:0055085">
    <property type="term" value="P:transmembrane transport"/>
    <property type="evidence" value="ECO:0007669"/>
    <property type="project" value="InterPro"/>
</dbReference>
<dbReference type="CDD" id="cd06261">
    <property type="entry name" value="TM_PBP2"/>
    <property type="match status" value="1"/>
</dbReference>
<dbReference type="Gene3D" id="1.10.3720.10">
    <property type="entry name" value="MetI-like"/>
    <property type="match status" value="1"/>
</dbReference>
<dbReference type="InterPro" id="IPR000515">
    <property type="entry name" value="MetI-like"/>
</dbReference>
<dbReference type="InterPro" id="IPR035906">
    <property type="entry name" value="MetI-like_sf"/>
</dbReference>
<dbReference type="InterPro" id="IPR052730">
    <property type="entry name" value="Sugar_ABC_transporter"/>
</dbReference>
<dbReference type="PANTHER" id="PTHR43759:SF1">
    <property type="entry name" value="GLUCOSE IMPORT SYSTEM PERMEASE PROTEIN GLCT"/>
    <property type="match status" value="1"/>
</dbReference>
<dbReference type="PANTHER" id="PTHR43759">
    <property type="entry name" value="TREHALOSE TRANSPORT SYSTEM PERMEASE PROTEIN SUGA"/>
    <property type="match status" value="1"/>
</dbReference>
<dbReference type="Pfam" id="PF00528">
    <property type="entry name" value="BPD_transp_1"/>
    <property type="match status" value="1"/>
</dbReference>
<dbReference type="SUPFAM" id="SSF161098">
    <property type="entry name" value="MetI-like"/>
    <property type="match status" value="1"/>
</dbReference>
<dbReference type="PROSITE" id="PS50928">
    <property type="entry name" value="ABC_TM1"/>
    <property type="match status" value="1"/>
</dbReference>
<comment type="function">
    <text evidence="1">Part of the ABC transporter complex LpqY-SugA-SugB-SugC, which is highly specific for uptake of trehalose. Involved in the recycling of extracellular trehalose released from trehalose-containing molecules synthesized by M.tuberculosis. Trehalose uptake is essential for virulence. Probably responsible for the translocation of the substrate across the membrane (By similarity).</text>
</comment>
<comment type="subunit">
    <text evidence="1">The complex is composed of two ATP-binding proteins (SugC), two transmembrane proteins (Suga and SugB) and a solute-binding protein (LpqY).</text>
</comment>
<comment type="subcellular location">
    <subcellularLocation>
        <location evidence="3">Cell inner membrane</location>
        <topology evidence="2">Multi-pass membrane protein</topology>
    </subcellularLocation>
</comment>
<comment type="similarity">
    <text evidence="3">Belongs to the binding-protein-dependent transport system permease family.</text>
</comment>
<organism>
    <name type="scientific">Mycobacterium tuberculosis (strain CDC 1551 / Oshkosh)</name>
    <dbReference type="NCBI Taxonomy" id="83331"/>
    <lineage>
        <taxon>Bacteria</taxon>
        <taxon>Bacillati</taxon>
        <taxon>Actinomycetota</taxon>
        <taxon>Actinomycetes</taxon>
        <taxon>Mycobacteriales</taxon>
        <taxon>Mycobacteriaceae</taxon>
        <taxon>Mycobacterium</taxon>
        <taxon>Mycobacterium tuberculosis complex</taxon>
    </lineage>
</organism>
<sequence>MTSVEQRTATAVFSRTGSRMAERRLAFMLVAPAAMLMVAVTAYPIGYALWLSLQRNNLATPNDTAFIGLGNYHTILIDRYWWTALAVTLAITAVSVTIEFVLGLALALVMHRTLIGKGLVRTAVLIPYGIVTVVASYSWYYAWTPGTGYLANLLPYDSAPLTQQIPSLGIVVIAEVWKTTPFMSLLLLAGLALVPEDLLRAAQVDGASAWRRLTKVILPMIKPAIVVALLFRTLDAFRIFDNIYVLTGGSNNTGSVSILGYDNLFKGFNVGLGSAISVLIFGCVAVIAFIFIKLFGAAAPGGEPSGR</sequence>
<evidence type="ECO:0000250" key="1"/>
<evidence type="ECO:0000255" key="2">
    <source>
        <dbReference type="PROSITE-ProRule" id="PRU00441"/>
    </source>
</evidence>
<evidence type="ECO:0000305" key="3"/>
<feature type="chain" id="PRO_0000428447" description="Trehalose transport system permease protein SugA">
    <location>
        <begin position="1"/>
        <end position="307"/>
    </location>
</feature>
<feature type="transmembrane region" description="Helical" evidence="2">
    <location>
        <begin position="25"/>
        <end position="45"/>
    </location>
</feature>
<feature type="transmembrane region" description="Helical" evidence="2">
    <location>
        <begin position="89"/>
        <end position="109"/>
    </location>
</feature>
<feature type="transmembrane region" description="Helical" evidence="2">
    <location>
        <begin position="123"/>
        <end position="143"/>
    </location>
</feature>
<feature type="transmembrane region" description="Helical" evidence="2">
    <location>
        <begin position="168"/>
        <end position="188"/>
    </location>
</feature>
<feature type="transmembrane region" description="Helical" evidence="2">
    <location>
        <begin position="217"/>
        <end position="237"/>
    </location>
</feature>
<feature type="transmembrane region" description="Helical" evidence="2">
    <location>
        <begin position="272"/>
        <end position="292"/>
    </location>
</feature>
<feature type="domain" description="ABC transmembrane type-1" evidence="2">
    <location>
        <begin position="85"/>
        <end position="291"/>
    </location>
</feature>
<keyword id="KW-0997">Cell inner membrane</keyword>
<keyword id="KW-1003">Cell membrane</keyword>
<keyword id="KW-0472">Membrane</keyword>
<keyword id="KW-1185">Reference proteome</keyword>
<keyword id="KW-0762">Sugar transport</keyword>
<keyword id="KW-0812">Transmembrane</keyword>
<keyword id="KW-1133">Transmembrane helix</keyword>
<keyword id="KW-0813">Transport</keyword>
<reference key="1">
    <citation type="journal article" date="2002" name="J. Bacteriol.">
        <title>Whole-genome comparison of Mycobacterium tuberculosis clinical and laboratory strains.</title>
        <authorList>
            <person name="Fleischmann R.D."/>
            <person name="Alland D."/>
            <person name="Eisen J.A."/>
            <person name="Carpenter L."/>
            <person name="White O."/>
            <person name="Peterson J.D."/>
            <person name="DeBoy R.T."/>
            <person name="Dodson R.J."/>
            <person name="Gwinn M.L."/>
            <person name="Haft D.H."/>
            <person name="Hickey E.K."/>
            <person name="Kolonay J.F."/>
            <person name="Nelson W.C."/>
            <person name="Umayam L.A."/>
            <person name="Ermolaeva M.D."/>
            <person name="Salzberg S.L."/>
            <person name="Delcher A."/>
            <person name="Utterback T.R."/>
            <person name="Weidman J.F."/>
            <person name="Khouri H.M."/>
            <person name="Gill J."/>
            <person name="Mikula A."/>
            <person name="Bishai W."/>
            <person name="Jacobs W.R. Jr."/>
            <person name="Venter J.C."/>
            <person name="Fraser C.M."/>
        </authorList>
    </citation>
    <scope>NUCLEOTIDE SEQUENCE [LARGE SCALE GENOMIC DNA]</scope>
    <source>
        <strain>CDC 1551 / Oshkosh</strain>
    </source>
</reference>
<name>SUGA_MYCTO</name>
<protein>
    <recommendedName>
        <fullName>Trehalose transport system permease protein SugA</fullName>
    </recommendedName>
</protein>
<proteinExistence type="inferred from homology"/>
<accession>P9WG02</accession>
<accession>F2GFS6</accession>
<accession>L0T699</accession>
<accession>O50452</accession>
<accession>Q7D8J8</accession>
<gene>
    <name type="primary">sugA</name>
    <name type="ordered locus">MT1274</name>
</gene>